<sequence>MNFKSDIQIAQECSMENIKDIAKKLNIFEDEIELYGKYKAKIDYNLLKTTKGKNGKLILCTAINPTPAGEGKTTTSIGVADALARLDKSVVVALREPSMGPVFGIKGGAAGGGYAQVVPMEDINLHFTGDIHAMTAANNLLAALIDNHIYQGNKLNIDSRRVVWRRCVDMNDRQLRFVVDGLGGKVNGIPREDGFDITVASEIMAIFCLSTDINDLKERISKIVVGYTTEGNPVTAHDLKAEGAMAALLKDALKPNLVQTLEGTPAFVHGGPFANIAHGCNSIMATRMAMHFGDYVVTEAGFGADLGAEKFLDIKCRMAGLRPDAVIIVATVRALKYNGGTPKTKLNNENLETLEKGIPNLLKHVENITKVFKLPAVVALNAFPTDTEAELKLVEEKCREFGVSVKLSEVWAKGGEGGIEVAKEVLRLINEGKNDFQFAYDEKLPIRDKIRAIAQKIYGADGVTFTNQAEKEIDELEKLGFGKTPVCIAKTQYSLTDDQNKLGRPKGFKITVRQVSISAGAGFVVAITGSIMKMPGLPKVPAAEKIDVDENGVISGLF</sequence>
<evidence type="ECO:0000255" key="1">
    <source>
        <dbReference type="HAMAP-Rule" id="MF_01543"/>
    </source>
</evidence>
<dbReference type="EC" id="6.3.4.3" evidence="1"/>
<dbReference type="EMBL" id="AP009049">
    <property type="protein sequence ID" value="BAH05436.1"/>
    <property type="molecule type" value="Genomic_DNA"/>
</dbReference>
<dbReference type="RefSeq" id="WP_011989009.1">
    <property type="nucleotide sequence ID" value="NC_011837.1"/>
</dbReference>
<dbReference type="SMR" id="B9DYW1"/>
<dbReference type="KEGG" id="ckr:CKR_0385"/>
<dbReference type="HOGENOM" id="CLU_003601_3_3_9"/>
<dbReference type="UniPathway" id="UPA00193"/>
<dbReference type="Proteomes" id="UP000007969">
    <property type="component" value="Chromosome"/>
</dbReference>
<dbReference type="GO" id="GO:0005524">
    <property type="term" value="F:ATP binding"/>
    <property type="evidence" value="ECO:0007669"/>
    <property type="project" value="UniProtKB-UniRule"/>
</dbReference>
<dbReference type="GO" id="GO:0004329">
    <property type="term" value="F:formate-tetrahydrofolate ligase activity"/>
    <property type="evidence" value="ECO:0007669"/>
    <property type="project" value="UniProtKB-UniRule"/>
</dbReference>
<dbReference type="GO" id="GO:0035999">
    <property type="term" value="P:tetrahydrofolate interconversion"/>
    <property type="evidence" value="ECO:0007669"/>
    <property type="project" value="UniProtKB-UniRule"/>
</dbReference>
<dbReference type="CDD" id="cd00477">
    <property type="entry name" value="FTHFS"/>
    <property type="match status" value="1"/>
</dbReference>
<dbReference type="FunFam" id="3.30.1510.10:FF:000001">
    <property type="entry name" value="Formate--tetrahydrofolate ligase"/>
    <property type="match status" value="1"/>
</dbReference>
<dbReference type="FunFam" id="3.10.410.10:FF:000001">
    <property type="entry name" value="Putative formate--tetrahydrofolate ligase"/>
    <property type="match status" value="1"/>
</dbReference>
<dbReference type="Gene3D" id="3.30.1510.10">
    <property type="entry name" value="Domain 2, N(10)-formyltetrahydrofolate synthetase"/>
    <property type="match status" value="1"/>
</dbReference>
<dbReference type="Gene3D" id="3.10.410.10">
    <property type="entry name" value="Formyltetrahydrofolate synthetase, domain 3"/>
    <property type="match status" value="1"/>
</dbReference>
<dbReference type="Gene3D" id="3.40.50.300">
    <property type="entry name" value="P-loop containing nucleotide triphosphate hydrolases"/>
    <property type="match status" value="1"/>
</dbReference>
<dbReference type="HAMAP" id="MF_01543">
    <property type="entry name" value="FTHFS"/>
    <property type="match status" value="1"/>
</dbReference>
<dbReference type="InterPro" id="IPR000559">
    <property type="entry name" value="Formate_THF_ligase"/>
</dbReference>
<dbReference type="InterPro" id="IPR020628">
    <property type="entry name" value="Formate_THF_ligase_CS"/>
</dbReference>
<dbReference type="InterPro" id="IPR027417">
    <property type="entry name" value="P-loop_NTPase"/>
</dbReference>
<dbReference type="NCBIfam" id="NF010030">
    <property type="entry name" value="PRK13505.1"/>
    <property type="match status" value="1"/>
</dbReference>
<dbReference type="Pfam" id="PF01268">
    <property type="entry name" value="FTHFS"/>
    <property type="match status" value="1"/>
</dbReference>
<dbReference type="SUPFAM" id="SSF52540">
    <property type="entry name" value="P-loop containing nucleoside triphosphate hydrolases"/>
    <property type="match status" value="1"/>
</dbReference>
<dbReference type="PROSITE" id="PS00721">
    <property type="entry name" value="FTHFS_1"/>
    <property type="match status" value="1"/>
</dbReference>
<dbReference type="PROSITE" id="PS00722">
    <property type="entry name" value="FTHFS_2"/>
    <property type="match status" value="1"/>
</dbReference>
<proteinExistence type="inferred from homology"/>
<organism>
    <name type="scientific">Clostridium kluyveri (strain NBRC 12016)</name>
    <dbReference type="NCBI Taxonomy" id="583346"/>
    <lineage>
        <taxon>Bacteria</taxon>
        <taxon>Bacillati</taxon>
        <taxon>Bacillota</taxon>
        <taxon>Clostridia</taxon>
        <taxon>Eubacteriales</taxon>
        <taxon>Clostridiaceae</taxon>
        <taxon>Clostridium</taxon>
    </lineage>
</organism>
<keyword id="KW-0067">ATP-binding</keyword>
<keyword id="KW-0436">Ligase</keyword>
<keyword id="KW-0547">Nucleotide-binding</keyword>
<keyword id="KW-0554">One-carbon metabolism</keyword>
<feature type="chain" id="PRO_1000185253" description="Formate--tetrahydrofolate ligase">
    <location>
        <begin position="1"/>
        <end position="558"/>
    </location>
</feature>
<feature type="binding site" evidence="1">
    <location>
        <begin position="66"/>
        <end position="73"/>
    </location>
    <ligand>
        <name>ATP</name>
        <dbReference type="ChEBI" id="CHEBI:30616"/>
    </ligand>
</feature>
<name>FTHS_CLOK1</name>
<accession>B9DYW1</accession>
<gene>
    <name evidence="1" type="primary">fhs</name>
    <name type="ordered locus">CKR_0385</name>
</gene>
<comment type="catalytic activity">
    <reaction evidence="1">
        <text>(6S)-5,6,7,8-tetrahydrofolate + formate + ATP = (6R)-10-formyltetrahydrofolate + ADP + phosphate</text>
        <dbReference type="Rhea" id="RHEA:20221"/>
        <dbReference type="ChEBI" id="CHEBI:15740"/>
        <dbReference type="ChEBI" id="CHEBI:30616"/>
        <dbReference type="ChEBI" id="CHEBI:43474"/>
        <dbReference type="ChEBI" id="CHEBI:57453"/>
        <dbReference type="ChEBI" id="CHEBI:195366"/>
        <dbReference type="ChEBI" id="CHEBI:456216"/>
        <dbReference type="EC" id="6.3.4.3"/>
    </reaction>
</comment>
<comment type="pathway">
    <text evidence="1">One-carbon metabolism; tetrahydrofolate interconversion.</text>
</comment>
<comment type="similarity">
    <text evidence="1">Belongs to the formate--tetrahydrofolate ligase family.</text>
</comment>
<reference key="1">
    <citation type="submission" date="2005-09" db="EMBL/GenBank/DDBJ databases">
        <title>Complete genome sequence of Clostridium kluyveri and comparative genomics of Clostridia species.</title>
        <authorList>
            <person name="Inui M."/>
            <person name="Nonaka H."/>
            <person name="Shinoda Y."/>
            <person name="Ikenaga Y."/>
            <person name="Abe M."/>
            <person name="Naito K."/>
            <person name="Vertes A.A."/>
            <person name="Yukawa H."/>
        </authorList>
    </citation>
    <scope>NUCLEOTIDE SEQUENCE [LARGE SCALE GENOMIC DNA]</scope>
    <source>
        <strain>NBRC 12016</strain>
    </source>
</reference>
<protein>
    <recommendedName>
        <fullName evidence="1">Formate--tetrahydrofolate ligase</fullName>
        <ecNumber evidence="1">6.3.4.3</ecNumber>
    </recommendedName>
    <alternativeName>
        <fullName evidence="1">Formyltetrahydrofolate synthetase</fullName>
        <shortName evidence="1">FHS</shortName>
        <shortName evidence="1">FTHFS</shortName>
    </alternativeName>
</protein>